<name>RL33_BRASO</name>
<dbReference type="EMBL" id="CU234118">
    <property type="protein sequence ID" value="CAL78251.1"/>
    <property type="molecule type" value="Genomic_DNA"/>
</dbReference>
<dbReference type="RefSeq" id="WP_008960778.1">
    <property type="nucleotide sequence ID" value="NC_009445.1"/>
</dbReference>
<dbReference type="SMR" id="A4YWH5"/>
<dbReference type="STRING" id="114615.BRADO4513"/>
<dbReference type="KEGG" id="bra:BRADO4513"/>
<dbReference type="eggNOG" id="COG0267">
    <property type="taxonomic scope" value="Bacteria"/>
</dbReference>
<dbReference type="HOGENOM" id="CLU_190949_1_1_5"/>
<dbReference type="OrthoDB" id="21586at2"/>
<dbReference type="Proteomes" id="UP000001994">
    <property type="component" value="Chromosome"/>
</dbReference>
<dbReference type="GO" id="GO:0022625">
    <property type="term" value="C:cytosolic large ribosomal subunit"/>
    <property type="evidence" value="ECO:0007669"/>
    <property type="project" value="TreeGrafter"/>
</dbReference>
<dbReference type="GO" id="GO:0003735">
    <property type="term" value="F:structural constituent of ribosome"/>
    <property type="evidence" value="ECO:0007669"/>
    <property type="project" value="InterPro"/>
</dbReference>
<dbReference type="GO" id="GO:0006412">
    <property type="term" value="P:translation"/>
    <property type="evidence" value="ECO:0007669"/>
    <property type="project" value="UniProtKB-UniRule"/>
</dbReference>
<dbReference type="FunFam" id="2.20.28.120:FF:000003">
    <property type="entry name" value="50S ribosomal protein L33"/>
    <property type="match status" value="1"/>
</dbReference>
<dbReference type="Gene3D" id="2.20.28.120">
    <property type="entry name" value="Ribosomal protein L33"/>
    <property type="match status" value="1"/>
</dbReference>
<dbReference type="HAMAP" id="MF_00294">
    <property type="entry name" value="Ribosomal_bL33"/>
    <property type="match status" value="1"/>
</dbReference>
<dbReference type="InterPro" id="IPR001705">
    <property type="entry name" value="Ribosomal_bL33"/>
</dbReference>
<dbReference type="InterPro" id="IPR038584">
    <property type="entry name" value="Ribosomal_bL33_sf"/>
</dbReference>
<dbReference type="InterPro" id="IPR011332">
    <property type="entry name" value="Ribosomal_zn-bd"/>
</dbReference>
<dbReference type="NCBIfam" id="NF001860">
    <property type="entry name" value="PRK00595.1"/>
    <property type="match status" value="1"/>
</dbReference>
<dbReference type="NCBIfam" id="TIGR01023">
    <property type="entry name" value="rpmG_bact"/>
    <property type="match status" value="1"/>
</dbReference>
<dbReference type="PANTHER" id="PTHR15238">
    <property type="entry name" value="54S RIBOSOMAL PROTEIN L39, MITOCHONDRIAL"/>
    <property type="match status" value="1"/>
</dbReference>
<dbReference type="PANTHER" id="PTHR15238:SF1">
    <property type="entry name" value="LARGE RIBOSOMAL SUBUNIT PROTEIN BL33M"/>
    <property type="match status" value="1"/>
</dbReference>
<dbReference type="Pfam" id="PF00471">
    <property type="entry name" value="Ribosomal_L33"/>
    <property type="match status" value="1"/>
</dbReference>
<dbReference type="SUPFAM" id="SSF57829">
    <property type="entry name" value="Zn-binding ribosomal proteins"/>
    <property type="match status" value="1"/>
</dbReference>
<accession>A4YWH5</accession>
<reference key="1">
    <citation type="journal article" date="2007" name="Science">
        <title>Legumes symbioses: absence of nod genes in photosynthetic bradyrhizobia.</title>
        <authorList>
            <person name="Giraud E."/>
            <person name="Moulin L."/>
            <person name="Vallenet D."/>
            <person name="Barbe V."/>
            <person name="Cytryn E."/>
            <person name="Avarre J.-C."/>
            <person name="Jaubert M."/>
            <person name="Simon D."/>
            <person name="Cartieaux F."/>
            <person name="Prin Y."/>
            <person name="Bena G."/>
            <person name="Hannibal L."/>
            <person name="Fardoux J."/>
            <person name="Kojadinovic M."/>
            <person name="Vuillet L."/>
            <person name="Lajus A."/>
            <person name="Cruveiller S."/>
            <person name="Rouy Z."/>
            <person name="Mangenot S."/>
            <person name="Segurens B."/>
            <person name="Dossat C."/>
            <person name="Franck W.L."/>
            <person name="Chang W.-S."/>
            <person name="Saunders E."/>
            <person name="Bruce D."/>
            <person name="Richardson P."/>
            <person name="Normand P."/>
            <person name="Dreyfus B."/>
            <person name="Pignol D."/>
            <person name="Stacey G."/>
            <person name="Emerich D."/>
            <person name="Vermeglio A."/>
            <person name="Medigue C."/>
            <person name="Sadowsky M."/>
        </authorList>
    </citation>
    <scope>NUCLEOTIDE SEQUENCE [LARGE SCALE GENOMIC DNA]</scope>
    <source>
        <strain>ORS 278</strain>
    </source>
</reference>
<evidence type="ECO:0000255" key="1">
    <source>
        <dbReference type="HAMAP-Rule" id="MF_00294"/>
    </source>
</evidence>
<evidence type="ECO:0000305" key="2"/>
<organism>
    <name type="scientific">Bradyrhizobium sp. (strain ORS 278)</name>
    <dbReference type="NCBI Taxonomy" id="114615"/>
    <lineage>
        <taxon>Bacteria</taxon>
        <taxon>Pseudomonadati</taxon>
        <taxon>Pseudomonadota</taxon>
        <taxon>Alphaproteobacteria</taxon>
        <taxon>Hyphomicrobiales</taxon>
        <taxon>Nitrobacteraceae</taxon>
        <taxon>Bradyrhizobium</taxon>
    </lineage>
</organism>
<comment type="similarity">
    <text evidence="1">Belongs to the bacterial ribosomal protein bL33 family.</text>
</comment>
<keyword id="KW-1185">Reference proteome</keyword>
<keyword id="KW-0687">Ribonucleoprotein</keyword>
<keyword id="KW-0689">Ribosomal protein</keyword>
<protein>
    <recommendedName>
        <fullName evidence="1">Large ribosomal subunit protein bL33</fullName>
    </recommendedName>
    <alternativeName>
        <fullName evidence="2">50S ribosomal protein L33</fullName>
    </alternativeName>
</protein>
<proteinExistence type="inferred from homology"/>
<gene>
    <name evidence="1" type="primary">rpmG</name>
    <name type="ordered locus">BRADO4513</name>
</gene>
<feature type="chain" id="PRO_0000356407" description="Large ribosomal subunit protein bL33">
    <location>
        <begin position="1"/>
        <end position="55"/>
    </location>
</feature>
<sequence>MAKAVTIKVKLVSSADTGFYYVAKKNSRTMTEKMVKKKYDPVARKHVEFREAKIK</sequence>